<protein>
    <recommendedName>
        <fullName evidence="1">Recombination protein RecR</fullName>
    </recommendedName>
</protein>
<accession>Q6MH30</accession>
<evidence type="ECO:0000255" key="1">
    <source>
        <dbReference type="HAMAP-Rule" id="MF_00017"/>
    </source>
</evidence>
<sequence>MLHISALEKLVHELSRLPGIGPKTAQRLAYYILRTGNEYPERLSEALLRVKAEVHDCPTCFNYTDTDICRYCEDSHRSDESICVVEEPSDIMRIESSGAFRGRYHVLHGAISPLEGIGPKELKIKELIDRVEDGLSGTGPAIKEIILALDADLEGDTTILYLAKQLQGKGLKLSRIAHGVPIGSDIDFVDDRTMGRALQNRVEL</sequence>
<name>RECR_BDEBA</name>
<dbReference type="EMBL" id="BX842656">
    <property type="protein sequence ID" value="CAE81097.1"/>
    <property type="molecule type" value="Genomic_DNA"/>
</dbReference>
<dbReference type="RefSeq" id="WP_011166040.1">
    <property type="nucleotide sequence ID" value="NC_005363.1"/>
</dbReference>
<dbReference type="SMR" id="Q6MH30"/>
<dbReference type="STRING" id="264462.Bd3733"/>
<dbReference type="GeneID" id="93014513"/>
<dbReference type="KEGG" id="bba:Bd3733"/>
<dbReference type="eggNOG" id="COG0353">
    <property type="taxonomic scope" value="Bacteria"/>
</dbReference>
<dbReference type="HOGENOM" id="CLU_060739_1_0_7"/>
<dbReference type="Proteomes" id="UP000008080">
    <property type="component" value="Chromosome"/>
</dbReference>
<dbReference type="GO" id="GO:0003677">
    <property type="term" value="F:DNA binding"/>
    <property type="evidence" value="ECO:0007669"/>
    <property type="project" value="UniProtKB-UniRule"/>
</dbReference>
<dbReference type="GO" id="GO:0008270">
    <property type="term" value="F:zinc ion binding"/>
    <property type="evidence" value="ECO:0007669"/>
    <property type="project" value="UniProtKB-KW"/>
</dbReference>
<dbReference type="GO" id="GO:0006310">
    <property type="term" value="P:DNA recombination"/>
    <property type="evidence" value="ECO:0007669"/>
    <property type="project" value="UniProtKB-UniRule"/>
</dbReference>
<dbReference type="GO" id="GO:0006281">
    <property type="term" value="P:DNA repair"/>
    <property type="evidence" value="ECO:0007669"/>
    <property type="project" value="UniProtKB-UniRule"/>
</dbReference>
<dbReference type="CDD" id="cd01025">
    <property type="entry name" value="TOPRIM_recR"/>
    <property type="match status" value="1"/>
</dbReference>
<dbReference type="Gene3D" id="3.40.1360.10">
    <property type="match status" value="1"/>
</dbReference>
<dbReference type="Gene3D" id="6.10.250.240">
    <property type="match status" value="1"/>
</dbReference>
<dbReference type="Gene3D" id="1.10.8.420">
    <property type="entry name" value="RecR Domain 1"/>
    <property type="match status" value="1"/>
</dbReference>
<dbReference type="HAMAP" id="MF_00017">
    <property type="entry name" value="RecR"/>
    <property type="match status" value="1"/>
</dbReference>
<dbReference type="InterPro" id="IPR000093">
    <property type="entry name" value="DNA_Rcmb_RecR"/>
</dbReference>
<dbReference type="InterPro" id="IPR023627">
    <property type="entry name" value="Rcmb_RecR"/>
</dbReference>
<dbReference type="InterPro" id="IPR015967">
    <property type="entry name" value="Rcmb_RecR_Znf"/>
</dbReference>
<dbReference type="InterPro" id="IPR006171">
    <property type="entry name" value="TOPRIM_dom"/>
</dbReference>
<dbReference type="InterPro" id="IPR034137">
    <property type="entry name" value="TOPRIM_RecR"/>
</dbReference>
<dbReference type="NCBIfam" id="TIGR00615">
    <property type="entry name" value="recR"/>
    <property type="match status" value="1"/>
</dbReference>
<dbReference type="PANTHER" id="PTHR30446">
    <property type="entry name" value="RECOMBINATION PROTEIN RECR"/>
    <property type="match status" value="1"/>
</dbReference>
<dbReference type="PANTHER" id="PTHR30446:SF0">
    <property type="entry name" value="RECOMBINATION PROTEIN RECR"/>
    <property type="match status" value="1"/>
</dbReference>
<dbReference type="Pfam" id="PF21175">
    <property type="entry name" value="RecR_C"/>
    <property type="match status" value="1"/>
</dbReference>
<dbReference type="Pfam" id="PF21176">
    <property type="entry name" value="RecR_HhH"/>
    <property type="match status" value="1"/>
</dbReference>
<dbReference type="Pfam" id="PF02132">
    <property type="entry name" value="RecR_ZnF"/>
    <property type="match status" value="1"/>
</dbReference>
<dbReference type="Pfam" id="PF13662">
    <property type="entry name" value="Toprim_4"/>
    <property type="match status" value="1"/>
</dbReference>
<dbReference type="SMART" id="SM00493">
    <property type="entry name" value="TOPRIM"/>
    <property type="match status" value="1"/>
</dbReference>
<dbReference type="SUPFAM" id="SSF111304">
    <property type="entry name" value="Recombination protein RecR"/>
    <property type="match status" value="1"/>
</dbReference>
<dbReference type="PROSITE" id="PS50880">
    <property type="entry name" value="TOPRIM"/>
    <property type="match status" value="1"/>
</dbReference>
<keyword id="KW-0227">DNA damage</keyword>
<keyword id="KW-0233">DNA recombination</keyword>
<keyword id="KW-0234">DNA repair</keyword>
<keyword id="KW-0479">Metal-binding</keyword>
<keyword id="KW-1185">Reference proteome</keyword>
<keyword id="KW-0862">Zinc</keyword>
<keyword id="KW-0863">Zinc-finger</keyword>
<gene>
    <name evidence="1" type="primary">recR</name>
    <name type="ordered locus">Bd3733</name>
</gene>
<comment type="function">
    <text evidence="1">May play a role in DNA repair. It seems to be involved in an RecBC-independent recombinational process of DNA repair. It may act with RecF and RecO.</text>
</comment>
<comment type="similarity">
    <text evidence="1">Belongs to the RecR family.</text>
</comment>
<organism>
    <name type="scientific">Bdellovibrio bacteriovorus (strain ATCC 15356 / DSM 50701 / NCIMB 9529 / HD100)</name>
    <dbReference type="NCBI Taxonomy" id="264462"/>
    <lineage>
        <taxon>Bacteria</taxon>
        <taxon>Pseudomonadati</taxon>
        <taxon>Bdellovibrionota</taxon>
        <taxon>Bdellovibrionia</taxon>
        <taxon>Bdellovibrionales</taxon>
        <taxon>Pseudobdellovibrionaceae</taxon>
        <taxon>Bdellovibrio</taxon>
    </lineage>
</organism>
<feature type="chain" id="PRO_0000190287" description="Recombination protein RecR">
    <location>
        <begin position="1"/>
        <end position="204"/>
    </location>
</feature>
<feature type="domain" description="Toprim" evidence="1">
    <location>
        <begin position="80"/>
        <end position="181"/>
    </location>
</feature>
<feature type="zinc finger region" description="C4-type" evidence="1">
    <location>
        <begin position="57"/>
        <end position="72"/>
    </location>
</feature>
<proteinExistence type="inferred from homology"/>
<reference key="1">
    <citation type="journal article" date="2004" name="Science">
        <title>A predator unmasked: life cycle of Bdellovibrio bacteriovorus from a genomic perspective.</title>
        <authorList>
            <person name="Rendulic S."/>
            <person name="Jagtap P."/>
            <person name="Rosinus A."/>
            <person name="Eppinger M."/>
            <person name="Baar C."/>
            <person name="Lanz C."/>
            <person name="Keller H."/>
            <person name="Lambert C."/>
            <person name="Evans K.J."/>
            <person name="Goesmann A."/>
            <person name="Meyer F."/>
            <person name="Sockett R.E."/>
            <person name="Schuster S.C."/>
        </authorList>
    </citation>
    <scope>NUCLEOTIDE SEQUENCE [LARGE SCALE GENOMIC DNA]</scope>
    <source>
        <strain>ATCC 15356 / DSM 50701 / NCIMB 9529 / HD100</strain>
    </source>
</reference>